<feature type="chain" id="PRO_0000092067" description="Putative ABC transporter ATP-binding protein SAV2684">
    <location>
        <begin position="1"/>
        <end position="570"/>
    </location>
</feature>
<feature type="domain" description="ABC transporter 1" evidence="2">
    <location>
        <begin position="6"/>
        <end position="247"/>
    </location>
</feature>
<feature type="domain" description="ABC transporter 2" evidence="2">
    <location>
        <begin position="304"/>
        <end position="537"/>
    </location>
</feature>
<feature type="binding site" evidence="2">
    <location>
        <begin position="40"/>
        <end position="47"/>
    </location>
    <ligand>
        <name>ATP</name>
        <dbReference type="ChEBI" id="CHEBI:30616"/>
        <label>1</label>
    </ligand>
</feature>
<feature type="binding site" evidence="2">
    <location>
        <begin position="338"/>
        <end position="345"/>
    </location>
    <ligand>
        <name>ATP</name>
        <dbReference type="ChEBI" id="CHEBI:30616"/>
        <label>2</label>
    </ligand>
</feature>
<keyword id="KW-0067">ATP-binding</keyword>
<keyword id="KW-1003">Cell membrane</keyword>
<keyword id="KW-0472">Membrane</keyword>
<keyword id="KW-0547">Nucleotide-binding</keyword>
<keyword id="KW-0677">Repeat</keyword>
<keyword id="KW-1278">Translocase</keyword>
<keyword id="KW-0813">Transport</keyword>
<accession>Q99QV7</accession>
<evidence type="ECO:0000250" key="1"/>
<evidence type="ECO:0000255" key="2">
    <source>
        <dbReference type="PROSITE-ProRule" id="PRU00434"/>
    </source>
</evidence>
<evidence type="ECO:0000305" key="3"/>
<proteinExistence type="inferred from homology"/>
<comment type="function">
    <text evidence="1">Probably part of an ABC transporter complex. Responsible for energy coupling to the transport system (By similarity).</text>
</comment>
<comment type="subcellular location">
    <subcellularLocation>
        <location evidence="1">Cell membrane</location>
        <topology evidence="1">Peripheral membrane protein</topology>
    </subcellularLocation>
</comment>
<comment type="similarity">
    <text evidence="3">Belongs to the ABC transporter superfamily.</text>
</comment>
<comment type="sequence caution" evidence="3">
    <conflict type="erroneous initiation">
        <sequence resource="EMBL-CDS" id="BAB58846"/>
    </conflict>
</comment>
<protein>
    <recommendedName>
        <fullName>Putative ABC transporter ATP-binding protein SAV2684</fullName>
        <ecNumber>7.-.-.-</ecNumber>
    </recommendedName>
</protein>
<dbReference type="EC" id="7.-.-.-"/>
<dbReference type="EMBL" id="BA000017">
    <property type="protein sequence ID" value="BAB58846.1"/>
    <property type="status" value="ALT_INIT"/>
    <property type="molecule type" value="Genomic_DNA"/>
</dbReference>
<dbReference type="RefSeq" id="WP_000138654.1">
    <property type="nucleotide sequence ID" value="NC_002758.2"/>
</dbReference>
<dbReference type="SMR" id="Q99QV7"/>
<dbReference type="KEGG" id="sav:SAV2684"/>
<dbReference type="HOGENOM" id="CLU_000604_86_7_9"/>
<dbReference type="Proteomes" id="UP000002481">
    <property type="component" value="Chromosome"/>
</dbReference>
<dbReference type="GO" id="GO:0043190">
    <property type="term" value="C:ATP-binding cassette (ABC) transporter complex"/>
    <property type="evidence" value="ECO:0007669"/>
    <property type="project" value="TreeGrafter"/>
</dbReference>
<dbReference type="GO" id="GO:0005524">
    <property type="term" value="F:ATP binding"/>
    <property type="evidence" value="ECO:0007669"/>
    <property type="project" value="UniProtKB-KW"/>
</dbReference>
<dbReference type="GO" id="GO:0016887">
    <property type="term" value="F:ATP hydrolysis activity"/>
    <property type="evidence" value="ECO:0007669"/>
    <property type="project" value="InterPro"/>
</dbReference>
<dbReference type="GO" id="GO:0042626">
    <property type="term" value="F:ATPase-coupled transmembrane transporter activity"/>
    <property type="evidence" value="ECO:0007669"/>
    <property type="project" value="TreeGrafter"/>
</dbReference>
<dbReference type="CDD" id="cd03225">
    <property type="entry name" value="ABC_cobalt_CbiO_domain1"/>
    <property type="match status" value="2"/>
</dbReference>
<dbReference type="FunFam" id="3.40.50.300:FF:001422">
    <property type="entry name" value="Cobalt ABC transporter ATP-binding protein"/>
    <property type="match status" value="1"/>
</dbReference>
<dbReference type="FunFam" id="3.40.50.300:FF:000224">
    <property type="entry name" value="Energy-coupling factor transporter ATP-binding protein EcfA"/>
    <property type="match status" value="1"/>
</dbReference>
<dbReference type="Gene3D" id="3.40.50.300">
    <property type="entry name" value="P-loop containing nucleotide triphosphate hydrolases"/>
    <property type="match status" value="2"/>
</dbReference>
<dbReference type="InterPro" id="IPR003593">
    <property type="entry name" value="AAA+_ATPase"/>
</dbReference>
<dbReference type="InterPro" id="IPR022216">
    <property type="entry name" value="ABC_Co_transporter"/>
</dbReference>
<dbReference type="InterPro" id="IPR003439">
    <property type="entry name" value="ABC_transporter-like_ATP-bd"/>
</dbReference>
<dbReference type="InterPro" id="IPR017871">
    <property type="entry name" value="ABC_transporter-like_CS"/>
</dbReference>
<dbReference type="InterPro" id="IPR015856">
    <property type="entry name" value="ABC_transpr_CbiO/EcfA_su"/>
</dbReference>
<dbReference type="InterPro" id="IPR050095">
    <property type="entry name" value="ECF_ABC_transporter_ATP-bd"/>
</dbReference>
<dbReference type="InterPro" id="IPR027417">
    <property type="entry name" value="P-loop_NTPase"/>
</dbReference>
<dbReference type="NCBIfam" id="NF010167">
    <property type="entry name" value="PRK13648.1"/>
    <property type="match status" value="2"/>
</dbReference>
<dbReference type="PANTHER" id="PTHR43553:SF26">
    <property type="entry name" value="ABC TRANSPORTER ATP-BINDING PROTEIN BC_2655-RELATED"/>
    <property type="match status" value="1"/>
</dbReference>
<dbReference type="PANTHER" id="PTHR43553">
    <property type="entry name" value="HEAVY METAL TRANSPORTER"/>
    <property type="match status" value="1"/>
</dbReference>
<dbReference type="Pfam" id="PF00005">
    <property type="entry name" value="ABC_tran"/>
    <property type="match status" value="2"/>
</dbReference>
<dbReference type="Pfam" id="PF12558">
    <property type="entry name" value="DUF3744"/>
    <property type="match status" value="1"/>
</dbReference>
<dbReference type="SMART" id="SM00382">
    <property type="entry name" value="AAA"/>
    <property type="match status" value="2"/>
</dbReference>
<dbReference type="SUPFAM" id="SSF52540">
    <property type="entry name" value="P-loop containing nucleoside triphosphate hydrolases"/>
    <property type="match status" value="2"/>
</dbReference>
<dbReference type="PROSITE" id="PS00211">
    <property type="entry name" value="ABC_TRANSPORTER_1"/>
    <property type="match status" value="2"/>
</dbReference>
<dbReference type="PROSITE" id="PS50893">
    <property type="entry name" value="ABC_TRANSPORTER_2"/>
    <property type="match status" value="2"/>
</dbReference>
<reference key="1">
    <citation type="journal article" date="2001" name="Lancet">
        <title>Whole genome sequencing of meticillin-resistant Staphylococcus aureus.</title>
        <authorList>
            <person name="Kuroda M."/>
            <person name="Ohta T."/>
            <person name="Uchiyama I."/>
            <person name="Baba T."/>
            <person name="Yuzawa H."/>
            <person name="Kobayashi I."/>
            <person name="Cui L."/>
            <person name="Oguchi A."/>
            <person name="Aoki K."/>
            <person name="Nagai Y."/>
            <person name="Lian J.-Q."/>
            <person name="Ito T."/>
            <person name="Kanamori M."/>
            <person name="Matsumaru H."/>
            <person name="Maruyama A."/>
            <person name="Murakami H."/>
            <person name="Hosoyama A."/>
            <person name="Mizutani-Ui Y."/>
            <person name="Takahashi N.K."/>
            <person name="Sawano T."/>
            <person name="Inoue R."/>
            <person name="Kaito C."/>
            <person name="Sekimizu K."/>
            <person name="Hirakawa H."/>
            <person name="Kuhara S."/>
            <person name="Goto S."/>
            <person name="Yabuzaki J."/>
            <person name="Kanehisa M."/>
            <person name="Yamashita A."/>
            <person name="Oshima K."/>
            <person name="Furuya K."/>
            <person name="Yoshino C."/>
            <person name="Shiba T."/>
            <person name="Hattori M."/>
            <person name="Ogasawara N."/>
            <person name="Hayashi H."/>
            <person name="Hiramatsu K."/>
        </authorList>
    </citation>
    <scope>NUCLEOTIDE SEQUENCE [LARGE SCALE GENOMIC DNA]</scope>
    <source>
        <strain>Mu50 / ATCC 700699</strain>
    </source>
</reference>
<gene>
    <name type="ordered locus">SAV2684</name>
</gene>
<organism>
    <name type="scientific">Staphylococcus aureus (strain Mu50 / ATCC 700699)</name>
    <dbReference type="NCBI Taxonomy" id="158878"/>
    <lineage>
        <taxon>Bacteria</taxon>
        <taxon>Bacillati</taxon>
        <taxon>Bacillota</taxon>
        <taxon>Bacilli</taxon>
        <taxon>Bacillales</taxon>
        <taxon>Staphylococcaceae</taxon>
        <taxon>Staphylococcus</taxon>
    </lineage>
</organism>
<name>Y2684_STAAM</name>
<sequence>MTEPIISFKDFSFQYHSQATPTLQNINVDIYPGEKVLVVGASGSGKSTFANCINGLIPFKTKGNITGELYINNQDATVSCLHDRSNVVGTVLQDTDGQFIGLTAAEDMAFLLENNCVEQDDMKKNVSYWAEKVGMIEHLNHRPQDLSGGQKQRVSLGGILIHRTPILILDEPLANLDPATGHETLRLLNNIHEETKSTMIIVEHRLEESLDDTFDRVLLFKDGKIIANTTPSDLLKSSKLKEAGIREPLYCTALKYAEVDVESIDNLANLRDVCMSEHVKFKVKKWIDETSANNDNKYKSEPLLELNEVCVQYSDYSNSVLNNVQLNVYRREMLSIVGHNGAGKSTLAKAICGFLDITGNIQFCNRGFNQLSISERSEFVGYVMQNPNHMISEKMIYDEVALGLRARGMKESDIKIRVENVLKICGLYAFRNWPIAALSYGQKKRVTIASVLVLNPEIIILDEPTAGQDFYHYNEIMSFLIELNRQGKTIIMITHDMHLLSEYSSRTVVLSKGQVVADTTPVLILNDKKICEIASLRQTSLFEMAEYIGISEPQKLVQLFINHDRKVRRQ</sequence>